<protein>
    <recommendedName>
        <fullName>Paired amphipathic helix protein Sin3b</fullName>
    </recommendedName>
    <alternativeName>
        <fullName>Histone deacetylase complex subunit Sin3b</fullName>
    </alternativeName>
    <alternativeName>
        <fullName>Transcriptional corepressor Sin3b</fullName>
    </alternativeName>
</protein>
<organism>
    <name type="scientific">Mus musculus</name>
    <name type="common">Mouse</name>
    <dbReference type="NCBI Taxonomy" id="10090"/>
    <lineage>
        <taxon>Eukaryota</taxon>
        <taxon>Metazoa</taxon>
        <taxon>Chordata</taxon>
        <taxon>Craniata</taxon>
        <taxon>Vertebrata</taxon>
        <taxon>Euteleostomi</taxon>
        <taxon>Mammalia</taxon>
        <taxon>Eutheria</taxon>
        <taxon>Euarchontoglires</taxon>
        <taxon>Glires</taxon>
        <taxon>Rodentia</taxon>
        <taxon>Myomorpha</taxon>
        <taxon>Muroidea</taxon>
        <taxon>Muridae</taxon>
        <taxon>Murinae</taxon>
        <taxon>Mus</taxon>
        <taxon>Mus</taxon>
    </lineage>
</organism>
<comment type="function">
    <text evidence="1 4 12 14">Acts as a transcriptional repressor. Interacts with MXI1 to repress MYC responsive genes and antagonize MYC oncogenic activities. Interacts with MAD-MAX heterodimers by binding to MAD. The heterodimer then represses transcription by tethering SIN3B to DNA. Also forms a complex with FOXK1 which represses transcription. With FOXK1, regulates cell cycle progression probably by repressing cell cycle inhibitor genes expression (PubMed:22476904). As part of the SIN3B complex represses transcription and counteracts the histone acetyltransferase activity of EP300 through the recognition H3K27ac marks by PHF12 and the activity of the histone deacetylase HDAC2. SIN3B complex is recruited downstream of the constitutively active genes transcriptional start sites through interaction with histones and mitigates histone acetylation and RNA polymerase II progression within transcribed regions contributing to the regulation of transcription (By similarity).</text>
</comment>
<comment type="subunit">
    <text evidence="1 4 5 6 7 8 9 10 11 12 13 14 15 16 17">Component of the SIN3B complex, which includes SIN3B, HDAC2 or HDAC1, PHF12 and MORF4L1 (By similarity). Interacts with FOXK1/MNF, MXI, MAD, NCOR1 and SAP30. Interaction with SUDS3 enhances the interaction with HDAC1 to form a complex. Interacts with CRY1, HCFC1, MAD3, MAD4, MAEL, REST, RNF220 and SETDB1. Interacts with C6orf89 (By similarity). Interacts with MYT1L (PubMed:28379941).</text>
</comment>
<comment type="interaction">
    <interactant intactId="EBI-591450">
        <id>Q62141</id>
    </interactant>
    <interactant intactId="EBI-2795840">
        <id>Q6PDX6</id>
        <label>Rnf220</label>
    </interactant>
    <organismsDiffer>false</organismsDiffer>
    <experiments>5</experiments>
</comment>
<comment type="interaction">
    <interactant intactId="EBI-591450">
        <id>Q62141</id>
    </interactant>
    <interactant intactId="EBI-591431">
        <id>Q8BR65</id>
        <label>Suds3</label>
    </interactant>
    <organismsDiffer>false</organismsDiffer>
    <experiments>5</experiments>
</comment>
<comment type="interaction">
    <interactant intactId="EBI-591450">
        <id>Q62141</id>
    </interactant>
    <interactant intactId="EBI-447544">
        <id>P01106</id>
        <label>MYC</label>
    </interactant>
    <organismsDiffer>true</organismsDiffer>
    <experiments>8</experiments>
</comment>
<comment type="interaction">
    <interactant intactId="EBI-591466">
        <id>Q62141-2</id>
    </interactant>
    <interactant intactId="EBI-878270">
        <id>P42128</id>
        <label>Foxk1</label>
    </interactant>
    <organismsDiffer>false</organismsDiffer>
    <experiments>11</experiments>
</comment>
<comment type="subcellular location">
    <subcellularLocation>
        <location evidence="2 11 14">Nucleus</location>
    </subcellularLocation>
</comment>
<comment type="alternative products">
    <event type="alternative splicing"/>
    <isoform>
        <id>Q62141-4</id>
        <name>4</name>
        <sequence type="displayed"/>
    </isoform>
    <isoform>
        <id>Q62141-1</id>
        <name>1</name>
        <sequence type="described" ref="VSP_014187"/>
    </isoform>
    <isoform>
        <id>Q62141-2</id>
        <name>2</name>
        <sequence type="described" ref="VSP_008225 VSP_008226 VSP_014187"/>
    </isoform>
    <isoform>
        <id>Q62141-3</id>
        <name>3</name>
        <sequence type="described" ref="VSP_008227 VSP_008228 VSP_014187"/>
    </isoform>
</comment>
<comment type="PTM">
    <text evidence="11">Ubiquitinated by RNF220 that leads to proteasomal degradation.</text>
</comment>
<comment type="sequence caution" evidence="21">
    <conflict type="erroneous initiation">
        <sequence resource="EMBL-CDS" id="BAD32283"/>
    </conflict>
    <text>Extended N-terminus.</text>
</comment>
<reference key="1">
    <citation type="journal article" date="1995" name="Cell">
        <title>Mad-Max transcriptional repression is mediated by ternary complex formation with mammalian homologs of yeast repressor Sin3.</title>
        <authorList>
            <person name="Ayer D.E."/>
            <person name="Lawrence Q.A."/>
            <person name="Eisenman R.N."/>
        </authorList>
    </citation>
    <scope>NUCLEOTIDE SEQUENCE [MRNA] (ISOFORM 1)</scope>
    <scope>FUNCTION</scope>
    <scope>SUBUNIT</scope>
    <scope>SUBCELLULAR LOCATION</scope>
    <source>
        <tissue>Embryonic kidney</tissue>
    </source>
</reference>
<reference key="2">
    <citation type="journal article" date="2000" name="Biochem. J.">
        <title>The winged-helix/forkhead protein myocyte nuclear factor beta (MNF-beta) forms a co-repressor complex with mammalian Sin3B.</title>
        <authorList>
            <person name="Yang Q."/>
            <person name="Kong Y."/>
            <person name="Rothermel B."/>
            <person name="Garry D.J."/>
            <person name="Bassel-Duby R."/>
            <person name="Williams R.S."/>
        </authorList>
    </citation>
    <scope>NUCLEOTIDE SEQUENCE [MRNA] (ISOFORM 2)</scope>
    <scope>FUNCTION</scope>
    <scope>INTERACTION WITH FOXK1</scope>
    <source>
        <tissue>Heart</tissue>
    </source>
</reference>
<reference key="3">
    <citation type="journal article" date="2004" name="DNA Res.">
        <title>Prediction of the coding sequences of mouse homologues of KIAA gene: IV. The complete nucleotide sequences of 500 mouse KIAA-homologous cDNAs identified by screening of terminal sequences of cDNA clones randomly sampled from size-fractionated libraries.</title>
        <authorList>
            <person name="Okazaki N."/>
            <person name="Kikuno R."/>
            <person name="Ohara R."/>
            <person name="Inamoto S."/>
            <person name="Koseki H."/>
            <person name="Hiraoka S."/>
            <person name="Saga Y."/>
            <person name="Seino S."/>
            <person name="Nishimura M."/>
            <person name="Kaisho T."/>
            <person name="Hoshino K."/>
            <person name="Kitamura H."/>
            <person name="Nagase T."/>
            <person name="Ohara O."/>
            <person name="Koga H."/>
        </authorList>
    </citation>
    <scope>NUCLEOTIDE SEQUENCE [LARGE SCALE MRNA] (ISOFORM 4)</scope>
    <source>
        <tissue>Brain</tissue>
    </source>
</reference>
<reference key="4">
    <citation type="journal article" date="2004" name="Genome Res.">
        <title>The status, quality, and expansion of the NIH full-length cDNA project: the Mammalian Gene Collection (MGC).</title>
        <authorList>
            <consortium name="The MGC Project Team"/>
        </authorList>
    </citation>
    <scope>NUCLEOTIDE SEQUENCE [LARGE SCALE MRNA] (ISOFORMS 2 AND 3)</scope>
    <source>
        <tissue>Mammary gland</tissue>
        <tissue>Salivary gland</tissue>
    </source>
</reference>
<reference key="5">
    <citation type="journal article" date="1995" name="EMBO J.">
        <title>Mad3 and Mad4: novel Max-interacting transcriptional repressors that suppress c-myc dependent transformation and are expressed during neural and epidermal differentiation.</title>
        <authorList>
            <person name="Hurlin P.J."/>
            <person name="Queva C."/>
            <person name="Koskinen P.J."/>
            <person name="Steingrimsson E."/>
            <person name="Ayer D.E."/>
            <person name="Copeland N.G."/>
            <person name="Jenkins N.A."/>
            <person name="Eisenman R.N."/>
        </authorList>
    </citation>
    <scope>INTERACTION WITH MAD3 AND MAD4</scope>
</reference>
<reference key="6">
    <citation type="journal article" date="1996" name="EMBO J.">
        <authorList>
            <person name="Hurlin P.J."/>
            <person name="Queva C."/>
            <person name="Koskinen P.J."/>
            <person name="Steingrimsson E."/>
            <person name="Ayer D.E."/>
            <person name="Copeland N.G."/>
            <person name="Jenkins N.A."/>
            <person name="Eisenman R.N."/>
        </authorList>
    </citation>
    <scope>ERRATUM OF PUBMED:8521822</scope>
</reference>
<reference key="7">
    <citation type="journal article" date="1997" name="Nature">
        <title>A complex containing N-CoR, mSin3 and histone deacetylase mediates transcriptional repression.</title>
        <authorList>
            <person name="Heinzel T."/>
            <person name="Lavinsky R.M."/>
            <person name="Mullen T.-M."/>
            <person name="Soederstroem M."/>
            <person name="Laherty C.D."/>
            <person name="Torchia J."/>
            <person name="Yang W.M."/>
            <person name="Brard G."/>
            <person name="Ngo S.D."/>
            <person name="Davie J.R."/>
            <person name="Seto E."/>
            <person name="Eisenman R.N."/>
            <person name="Rose D.W."/>
            <person name="Glass C.K."/>
            <person name="Rosenfeld M.G."/>
        </authorList>
    </citation>
    <scope>INTERACTION WITH NCOR1</scope>
</reference>
<reference key="8">
    <citation type="journal article" date="1998" name="Mol. Cell">
        <title>SAP30, a component of the mSin3 corepressor complex involved in N-CoR-mediated repression by specific transcription factors.</title>
        <authorList>
            <person name="Laherty C.D."/>
            <person name="Billin A.N."/>
            <person name="Lavinsky R.M."/>
            <person name="Yochum G.S."/>
            <person name="Bush A.C."/>
            <person name="Sun J.-M."/>
            <person name="Mullen T.-M."/>
            <person name="Davie J.R."/>
            <person name="Rose D.W."/>
            <person name="Glass C.K."/>
            <person name="Rosenfeld M.G."/>
            <person name="Ayer D.E."/>
            <person name="Eisenman R.N."/>
        </authorList>
    </citation>
    <scope>INTERACTION WITH SAP30</scope>
</reference>
<reference key="9">
    <citation type="journal article" date="2002" name="Mol. Cell. Biol.">
        <title>Identification of mammalian Sds3 as an integral component of the Sin3/histone deacetylase corepressor complex.</title>
        <authorList>
            <person name="Alland L."/>
            <person name="David G."/>
            <person name="Shen-Li H."/>
            <person name="Potes J."/>
            <person name="Muhle R."/>
            <person name="Lee H.-C."/>
            <person name="Hou H. Jr."/>
            <person name="Chen K."/>
            <person name="DePinho R.A."/>
        </authorList>
    </citation>
    <scope>INTERACTION WITH SUDS3 AND HDAC1</scope>
</reference>
<reference key="10">
    <citation type="journal article" date="2003" name="Biochem. J.">
        <title>An ERG (ets-related gene)-associated histone methyltransferase interacts with histone deacetylases 1/2 and transcription co-repressors mSin3A/B.</title>
        <authorList>
            <person name="Yang L."/>
            <person name="Mei Q."/>
            <person name="Zielinska-Kwiatkowska A."/>
            <person name="Matsui Y."/>
            <person name="Blackburn M.L."/>
            <person name="Benedetti D."/>
            <person name="Krumm A.A."/>
            <person name="Taborsky G.J. Jr."/>
            <person name="Chansky H.A."/>
        </authorList>
    </citation>
    <scope>INTERACTION WITH SETDB1</scope>
</reference>
<reference key="11">
    <citation type="journal article" date="2004" name="Mol. Cell. Biol.">
        <title>Circadian and light-induced transcription of clock gene Per1 depends on histone acetylation and deacetylation.</title>
        <authorList>
            <person name="Naruse Y."/>
            <person name="Oh-hashi K."/>
            <person name="Iijima N."/>
            <person name="Naruse M."/>
            <person name="Yoshioka H."/>
            <person name="Tanaka M."/>
        </authorList>
    </citation>
    <scope>INTERACTION WITH CRY1</scope>
</reference>
<reference key="12">
    <citation type="journal article" date="2006" name="Hum. Mol. Genet.">
        <title>Mouse MAELSTROM: the link between meiotic silencing of unsynapsed chromatin and microRNA pathway?</title>
        <authorList>
            <person name="Costa Y."/>
            <person name="Speed R.M."/>
            <person name="Gautier P."/>
            <person name="Semple C.A."/>
            <person name="Maratou K."/>
            <person name="Turner J.M.A."/>
            <person name="Cooke H.J."/>
        </authorList>
    </citation>
    <scope>INTERACTION WITH MAEL</scope>
</reference>
<reference key="13">
    <citation type="journal article" date="2010" name="Biochem. Biophys. Res. Commun.">
        <title>RNF220, an E3 ubiquitin ligase that targets Sin3B for ubiquitination.</title>
        <authorList>
            <person name="Kong Q."/>
            <person name="Zeng W."/>
            <person name="Wu J."/>
            <person name="Hu W."/>
            <person name="Li C."/>
            <person name="Mao B."/>
        </authorList>
    </citation>
    <scope>INTERACTION WITH RNF220</scope>
    <scope>SUBCELLULAR LOCATION</scope>
    <scope>UBIQUITINATION</scope>
</reference>
<reference key="14">
    <citation type="journal article" date="2010" name="Cell">
        <title>A tissue-specific atlas of mouse protein phosphorylation and expression.</title>
        <authorList>
            <person name="Huttlin E.L."/>
            <person name="Jedrychowski M.P."/>
            <person name="Elias J.E."/>
            <person name="Goswami T."/>
            <person name="Rad R."/>
            <person name="Beausoleil S.A."/>
            <person name="Villen J."/>
            <person name="Haas W."/>
            <person name="Sowa M.E."/>
            <person name="Gygi S.P."/>
        </authorList>
    </citation>
    <scope>PHOSPHORYLATION [LARGE SCALE ANALYSIS] AT SER-667 AND SER-670</scope>
    <scope>IDENTIFICATION BY MASS SPECTROMETRY [LARGE SCALE ANALYSIS]</scope>
    <source>
        <tissue>Kidney</tissue>
        <tissue>Testis</tissue>
    </source>
</reference>
<reference key="15">
    <citation type="journal article" date="2012" name="Mol. Cell. Biochem.">
        <title>Sin3 interacts with Foxk1 and regulates myogenic progenitors.</title>
        <authorList>
            <person name="Shi X."/>
            <person name="Garry D.J."/>
        </authorList>
    </citation>
    <scope>FUNCTION</scope>
    <scope>INTERACTION WITH FOXK1</scope>
</reference>
<reference key="16">
    <citation type="journal article" date="2017" name="Nature">
        <title>Myt1l safeguards neuronal identity by actively repressing many non-neuronal fates.</title>
        <authorList>
            <person name="Mall M."/>
            <person name="Kareta M.S."/>
            <person name="Chanda S."/>
            <person name="Ahlenius H."/>
            <person name="Perotti N."/>
            <person name="Zhou B."/>
            <person name="Grieder S.D."/>
            <person name="Ge X."/>
            <person name="Drake S."/>
            <person name="Euong Ang C."/>
            <person name="Walker B.M."/>
            <person name="Vierbuchen T."/>
            <person name="Fuentes D.R."/>
            <person name="Brennecke P."/>
            <person name="Nitta K.R."/>
            <person name="Jolma A."/>
            <person name="Steinmetz L.M."/>
            <person name="Taipale J."/>
            <person name="Suedhof T.C."/>
            <person name="Wernig M."/>
        </authorList>
    </citation>
    <scope>INTERACTION WITH MYT1L</scope>
</reference>
<reference key="17">
    <citation type="journal article" date="2000" name="Nat. Struct. Biol.">
        <title>The Mad1-Sin3B interaction involves a novel helical fold.</title>
        <authorList>
            <person name="Spronk C.A.E."/>
            <person name="Tessari M."/>
            <person name="Kaan A.M."/>
            <person name="Jansen J.F.A."/>
            <person name="Vermeulen M."/>
            <person name="Stunnenberg H.G."/>
            <person name="Vuister G.W."/>
        </authorList>
    </citation>
    <scope>STRUCTURE BY NMR OF 148-232 IN COMPLEX WITH MAD1</scope>
</reference>
<reference key="18">
    <citation type="journal article" date="2005" name="J. Mol. Biol.">
        <title>The neural repressor NRSF/REST binds the PAH1 domain of the Sin3 corepressor by using its distinct short hydrophobic helix.</title>
        <authorList>
            <person name="Nomura M."/>
            <person name="Uda-Tochio H."/>
            <person name="Murai K."/>
            <person name="Mori N."/>
            <person name="Nishimura Y."/>
        </authorList>
    </citation>
    <scope>STRUCTURE BY NMR OF 31-107 IN COMPLEX WITH REST</scope>
    <scope>INTERACTION WITH REST</scope>
</reference>
<reference key="19">
    <citation type="submission" date="2005-11" db="PDB data bank">
        <title>Solution structure of the first PAH domain of the mouse transcriptional repressor SIN3B.</title>
        <authorList>
            <consortium name="RIKEN structural genomics initiative (RSGI)"/>
        </authorList>
    </citation>
    <scope>STRUCTURE BY NMR OF 32-100</scope>
</reference>
<keyword id="KW-0002">3D-structure</keyword>
<keyword id="KW-0025">Alternative splicing</keyword>
<keyword id="KW-0539">Nucleus</keyword>
<keyword id="KW-0597">Phosphoprotein</keyword>
<keyword id="KW-1185">Reference proteome</keyword>
<keyword id="KW-0677">Repeat</keyword>
<keyword id="KW-0678">Repressor</keyword>
<keyword id="KW-0804">Transcription</keyword>
<keyword id="KW-0805">Transcription regulation</keyword>
<keyword id="KW-0832">Ubl conjugation</keyword>
<proteinExistence type="evidence at protein level"/>
<feature type="chain" id="PRO_0000121540" description="Paired amphipathic helix protein Sin3b">
    <location>
        <begin position="1"/>
        <end position="1098"/>
    </location>
</feature>
<feature type="domain" description="PAH 1" evidence="2">
    <location>
        <begin position="30"/>
        <end position="100"/>
    </location>
</feature>
<feature type="domain" description="PAH 2" evidence="2">
    <location>
        <begin position="145"/>
        <end position="230"/>
    </location>
</feature>
<feature type="domain" description="PAH 3" evidence="2">
    <location>
        <begin position="283"/>
        <end position="360"/>
    </location>
</feature>
<feature type="region of interest" description="Interaction with CRY1" evidence="8">
    <location>
        <begin position="1"/>
        <end position="299"/>
    </location>
</feature>
<feature type="region of interest" description="Disordered" evidence="3">
    <location>
        <begin position="1"/>
        <end position="26"/>
    </location>
</feature>
<feature type="region of interest" description="Interaction with REST" evidence="9">
    <location>
        <begin position="52"/>
        <end position="98"/>
    </location>
</feature>
<feature type="region of interest" description="Disordered" evidence="3">
    <location>
        <begin position="238"/>
        <end position="274"/>
    </location>
</feature>
<feature type="region of interest" description="Interaction with NCOR1" evidence="16">
    <location>
        <begin position="275"/>
        <end position="499"/>
    </location>
</feature>
<feature type="region of interest" description="Interaction with SUDS3 and HDAC1" evidence="6">
    <location>
        <begin position="383"/>
        <end position="550"/>
    </location>
</feature>
<feature type="region of interest" description="Disordered" evidence="3">
    <location>
        <begin position="661"/>
        <end position="702"/>
    </location>
</feature>
<feature type="compositionally biased region" description="Gly residues" evidence="3">
    <location>
        <begin position="1"/>
        <end position="25"/>
    </location>
</feature>
<feature type="compositionally biased region" description="Polar residues" evidence="3">
    <location>
        <begin position="238"/>
        <end position="247"/>
    </location>
</feature>
<feature type="compositionally biased region" description="Basic and acidic residues" evidence="3">
    <location>
        <begin position="673"/>
        <end position="694"/>
    </location>
</feature>
<feature type="modified residue" description="Phosphoserine" evidence="22">
    <location>
        <position position="667"/>
    </location>
</feature>
<feature type="modified residue" description="Phosphoserine" evidence="22">
    <location>
        <position position="670"/>
    </location>
</feature>
<feature type="splice variant" id="VSP_008227" description="In isoform 3." evidence="19">
    <original>KKMKLRGTKDLSIAAVGKYGTLQEFSFF</original>
    <variation>VLVHVWVLPAHGRSGVEAQAAGEPEARA</variation>
    <location>
        <begin position="275"/>
        <end position="302"/>
    </location>
</feature>
<feature type="splice variant" id="VSP_008225" description="In isoform 2." evidence="18 19">
    <original>KKMKLRGTKDLSIAAVGKY</original>
    <variation>VGLQLKCAVVWFGYCTAEE</variation>
    <location>
        <begin position="275"/>
        <end position="293"/>
    </location>
</feature>
<feature type="splice variant" id="VSP_008226" description="In isoform 2." evidence="18 19">
    <location>
        <begin position="294"/>
        <end position="954"/>
    </location>
</feature>
<feature type="splice variant" id="VSP_008228" description="In isoform 3." evidence="19">
    <location>
        <begin position="303"/>
        <end position="954"/>
    </location>
</feature>
<feature type="splice variant" id="VSP_014187" description="In isoform 1, isoform 2 and isoform 3." evidence="18 19 20">
    <location>
        <begin position="955"/>
        <end position="1098"/>
    </location>
</feature>
<feature type="sequence conflict" description="In Ref. 2; AAC04821." evidence="21" ref="2">
    <original>A</original>
    <variation>G</variation>
    <location>
        <position position="230"/>
    </location>
</feature>
<feature type="sequence conflict" description="In Ref. 2; AAC04821." evidence="21" ref="2">
    <original>S</original>
    <variation>P</variation>
    <location>
        <position position="233"/>
    </location>
</feature>
<feature type="helix" evidence="24">
    <location>
        <begin position="38"/>
        <end position="47"/>
    </location>
</feature>
<feature type="turn" evidence="25">
    <location>
        <begin position="48"/>
        <end position="50"/>
    </location>
</feature>
<feature type="helix" evidence="24">
    <location>
        <begin position="52"/>
        <end position="66"/>
    </location>
</feature>
<feature type="helix" evidence="24">
    <location>
        <begin position="72"/>
        <end position="82"/>
    </location>
</feature>
<feature type="helix" evidence="24">
    <location>
        <begin position="83"/>
        <end position="85"/>
    </location>
</feature>
<feature type="helix" evidence="24">
    <location>
        <begin position="87"/>
        <end position="96"/>
    </location>
</feature>
<feature type="strand" evidence="25">
    <location>
        <begin position="99"/>
        <end position="101"/>
    </location>
</feature>
<feature type="helix" evidence="23">
    <location>
        <begin position="152"/>
        <end position="167"/>
    </location>
</feature>
<feature type="turn" evidence="26">
    <location>
        <begin position="168"/>
        <end position="170"/>
    </location>
</feature>
<feature type="helix" evidence="23">
    <location>
        <begin position="172"/>
        <end position="187"/>
    </location>
</feature>
<feature type="strand" evidence="23">
    <location>
        <begin position="191"/>
        <end position="193"/>
    </location>
</feature>
<feature type="helix" evidence="23">
    <location>
        <begin position="202"/>
        <end position="212"/>
    </location>
</feature>
<feature type="turn" evidence="26">
    <location>
        <begin position="213"/>
        <end position="215"/>
    </location>
</feature>
<feature type="helix" evidence="23">
    <location>
        <begin position="217"/>
        <end position="226"/>
    </location>
</feature>
<feature type="helix" evidence="26">
    <location>
        <begin position="229"/>
        <end position="231"/>
    </location>
</feature>
<sequence length="1098" mass="126405">MAHAGSGGSAGRGFGGSRWGRSGSGGHEKLPVHVEDALTYLDQVKIRFGSDPATYNGFLEIMKEFKSQSIDTPGVIRRVSQLFHEHPDLIVGFNAFLPLGYRIDIPKNGKLNIQSPLSSQDNSHSHGDCGEDFKQMSYKEDRGQVPLESDSVEFNNAISYVNKIKTRFLDHPEIYRSFLEILHTYQKEQLHTKGRPFRGMSEEEVFTEVANLFRGQEDLLSEFGQFLPEAKRSLFTGNGSCEMNSGQKNEEKSLEHNKKRSRPSLLRPVSAPAKKKMKLRGTKDLSIAAVGKYGTLQEFSFFDKVRRVLKSQEVYENFLRCIALFNQELVSGSELLQLVSPFLGKFPELFAQFKSFLGVKELSFAPPMSDRSGDGISREIDYASCKRIGSSYRALPKTYQQPKCSGRTAICKEVLNDTWVSFPSWSEDSTFVSSKKTPYEEQLHRCEDERFELDVVLETNLATIRVLESVQKKLSRMAPEDQEKLRLDDCLGGTSEVIQRRAIHRIYGDKAPEVIESLKRNPATAVPVVLKRLKAKEEEWREAQQGFNKIWREQYEKAYLKSLDHQAVNFKQNDTKALRSKSLLNEIESVYDEHQEQHSEGRSAPSSEPHLIFVYEDRQILEDAAALISYYVKRQPAIQKEDQGTIRQLLHRFLPSLFFSQQCPGTSDDSADERDRDRDSAEPERRRPTDEKPPADASPEPPKVLDDVYSLFFANNNWYFFLRLHQTLCARLLKIYRQAQKQLLEHRREQEREQLLCEGRREKAADPAMELRLKQPSEVELEEYYPAFLDMVRSLLEGSIDPTQYEDTLREMFTIHAYIGFTMDKLVQNIARQLHHLVSDDVCLKVVELYLNEQQRGAAGGNLSSRCVRAARETSYQWKAERCMADENCFKVMFLQRRGQVIMTIELLDTEEAQTEDPVEVQHLARYVEQYVGSEGASSSSTEGFLLKPVFLQRNLKKFRRWQCEQVRAMRGEAKSSWKRLMGVESACDVDCRFRLGTHKMVFIVNSEDYMYRRGTLCRAKQVQPLVLLRHHRHFEEWHGRWLEDNVTVAAAGLVQDWLMGEEEEDMVPCKTLCETAHVHGLPVTRYRVQYSRRPASP</sequence>
<name>SIN3B_MOUSE</name>
<accession>Q62141</accession>
<accession>O54976</accession>
<accession>Q6A013</accession>
<accession>Q8VCB8</accession>
<accession>Q8VDZ5</accession>
<evidence type="ECO:0000250" key="1">
    <source>
        <dbReference type="UniProtKB" id="O75182"/>
    </source>
</evidence>
<evidence type="ECO:0000255" key="2">
    <source>
        <dbReference type="PROSITE-ProRule" id="PRU00810"/>
    </source>
</evidence>
<evidence type="ECO:0000256" key="3">
    <source>
        <dbReference type="SAM" id="MobiDB-lite"/>
    </source>
</evidence>
<evidence type="ECO:0000269" key="4">
    <source>
    </source>
</evidence>
<evidence type="ECO:0000269" key="5">
    <source>
    </source>
</evidence>
<evidence type="ECO:0000269" key="6">
    <source>
    </source>
</evidence>
<evidence type="ECO:0000269" key="7">
    <source>
    </source>
</evidence>
<evidence type="ECO:0000269" key="8">
    <source>
    </source>
</evidence>
<evidence type="ECO:0000269" key="9">
    <source>
    </source>
</evidence>
<evidence type="ECO:0000269" key="10">
    <source>
    </source>
</evidence>
<evidence type="ECO:0000269" key="11">
    <source>
    </source>
</evidence>
<evidence type="ECO:0000269" key="12">
    <source>
    </source>
</evidence>
<evidence type="ECO:0000269" key="13">
    <source>
    </source>
</evidence>
<evidence type="ECO:0000269" key="14">
    <source>
    </source>
</evidence>
<evidence type="ECO:0000269" key="15">
    <source>
    </source>
</evidence>
<evidence type="ECO:0000269" key="16">
    <source>
    </source>
</evidence>
<evidence type="ECO:0000269" key="17">
    <source>
    </source>
</evidence>
<evidence type="ECO:0000303" key="18">
    <source>
    </source>
</evidence>
<evidence type="ECO:0000303" key="19">
    <source>
    </source>
</evidence>
<evidence type="ECO:0000303" key="20">
    <source>
    </source>
</evidence>
<evidence type="ECO:0000305" key="21"/>
<evidence type="ECO:0007744" key="22">
    <source>
    </source>
</evidence>
<evidence type="ECO:0007829" key="23">
    <source>
        <dbReference type="PDB" id="1E91"/>
    </source>
</evidence>
<evidence type="ECO:0007829" key="24">
    <source>
        <dbReference type="PDB" id="2CR7"/>
    </source>
</evidence>
<evidence type="ECO:0007829" key="25">
    <source>
        <dbReference type="PDB" id="2CZY"/>
    </source>
</evidence>
<evidence type="ECO:0007829" key="26">
    <source>
        <dbReference type="PDB" id="2F05"/>
    </source>
</evidence>
<dbReference type="EMBL" id="L38622">
    <property type="protein sequence ID" value="AAA69774.1"/>
    <property type="molecule type" value="mRNA"/>
</dbReference>
<dbReference type="EMBL" id="AF038848">
    <property type="protein sequence ID" value="AAC04821.1"/>
    <property type="molecule type" value="mRNA"/>
</dbReference>
<dbReference type="EMBL" id="AK173005">
    <property type="protein sequence ID" value="BAD32283.1"/>
    <property type="status" value="ALT_INIT"/>
    <property type="molecule type" value="mRNA"/>
</dbReference>
<dbReference type="EMBL" id="BC020049">
    <property type="protein sequence ID" value="AAH20049.1"/>
    <property type="molecule type" value="mRNA"/>
</dbReference>
<dbReference type="EMBL" id="BC021160">
    <property type="protein sequence ID" value="AAH21160.1"/>
    <property type="molecule type" value="mRNA"/>
</dbReference>
<dbReference type="CCDS" id="CCDS52598.1">
    <molecule id="Q62141-2"/>
</dbReference>
<dbReference type="CCDS" id="CCDS52599.1">
    <molecule id="Q62141-4"/>
</dbReference>
<dbReference type="PIR" id="I61714">
    <property type="entry name" value="I61714"/>
</dbReference>
<dbReference type="RefSeq" id="NP_001106719.1">
    <molecule id="Q62141-2"/>
    <property type="nucleotide sequence ID" value="NM_001113248.2"/>
</dbReference>
<dbReference type="RefSeq" id="NP_033214.2">
    <molecule id="Q62141-4"/>
    <property type="nucleotide sequence ID" value="NM_009188.4"/>
</dbReference>
<dbReference type="PDB" id="1E91">
    <property type="method" value="NMR"/>
    <property type="chains" value="A=148-232"/>
</dbReference>
<dbReference type="PDB" id="1PD7">
    <property type="method" value="NMR"/>
    <property type="chains" value="A=148-232"/>
</dbReference>
<dbReference type="PDB" id="2CR7">
    <property type="method" value="NMR"/>
    <property type="chains" value="A=32-98"/>
</dbReference>
<dbReference type="PDB" id="2CZY">
    <property type="method" value="NMR"/>
    <property type="chains" value="A=31-107"/>
</dbReference>
<dbReference type="PDB" id="2F05">
    <property type="method" value="NMR"/>
    <property type="chains" value="A=148-252"/>
</dbReference>
<dbReference type="PDB" id="5Y95">
    <property type="method" value="NMR"/>
    <property type="chains" value="A=32-98"/>
</dbReference>
<dbReference type="PDBsum" id="1E91"/>
<dbReference type="PDBsum" id="1PD7"/>
<dbReference type="PDBsum" id="2CR7"/>
<dbReference type="PDBsum" id="2CZY"/>
<dbReference type="PDBsum" id="2F05"/>
<dbReference type="PDBsum" id="5Y95"/>
<dbReference type="SMR" id="Q62141"/>
<dbReference type="BioGRID" id="203257">
    <property type="interactions" value="24"/>
</dbReference>
<dbReference type="ComplexPortal" id="CPX-3444">
    <property type="entry name" value="SIN3B histone deacetylase complex"/>
</dbReference>
<dbReference type="CORUM" id="Q62141"/>
<dbReference type="DIP" id="DIP-470N"/>
<dbReference type="FunCoup" id="Q62141">
    <property type="interactions" value="2748"/>
</dbReference>
<dbReference type="IntAct" id="Q62141">
    <property type="interactions" value="8"/>
</dbReference>
<dbReference type="MINT" id="Q62141"/>
<dbReference type="STRING" id="10090.ENSMUSP00000004494"/>
<dbReference type="ChEMBL" id="CHEMBL4105761"/>
<dbReference type="GlyGen" id="Q62141">
    <property type="glycosylation" value="1 site, 1 O-linked glycan (1 site)"/>
</dbReference>
<dbReference type="iPTMnet" id="Q62141"/>
<dbReference type="PhosphoSitePlus" id="Q62141"/>
<dbReference type="jPOST" id="Q62141"/>
<dbReference type="PaxDb" id="10090-ENSMUSP00000004494"/>
<dbReference type="PeptideAtlas" id="Q62141"/>
<dbReference type="ProteomicsDB" id="261368">
    <molecule id="Q62141-4"/>
</dbReference>
<dbReference type="ProteomicsDB" id="261369">
    <molecule id="Q62141-1"/>
</dbReference>
<dbReference type="ProteomicsDB" id="261370">
    <molecule id="Q62141-2"/>
</dbReference>
<dbReference type="ProteomicsDB" id="261371">
    <molecule id="Q62141-3"/>
</dbReference>
<dbReference type="Pumba" id="Q62141"/>
<dbReference type="Antibodypedia" id="27459">
    <property type="antibodies" value="238 antibodies from 26 providers"/>
</dbReference>
<dbReference type="DNASU" id="20467"/>
<dbReference type="Ensembl" id="ENSMUST00000004494.16">
    <molecule id="Q62141-4"/>
    <property type="protein sequence ID" value="ENSMUSP00000004494.9"/>
    <property type="gene ID" value="ENSMUSG00000031622.17"/>
</dbReference>
<dbReference type="Ensembl" id="ENSMUST00000109950.5">
    <molecule id="Q62141-2"/>
    <property type="protein sequence ID" value="ENSMUSP00000105576.4"/>
    <property type="gene ID" value="ENSMUSG00000031622.17"/>
</dbReference>
<dbReference type="Ensembl" id="ENSMUST00000212095.2">
    <molecule id="Q62141-3"/>
    <property type="protein sequence ID" value="ENSMUSP00000148407.2"/>
    <property type="gene ID" value="ENSMUSG00000031622.17"/>
</dbReference>
<dbReference type="GeneID" id="20467"/>
<dbReference type="KEGG" id="mmu:20467"/>
<dbReference type="UCSC" id="uc009mgp.3">
    <molecule id="Q62141-4"/>
    <property type="organism name" value="mouse"/>
</dbReference>
<dbReference type="AGR" id="MGI:107158"/>
<dbReference type="CTD" id="23309"/>
<dbReference type="MGI" id="MGI:107158">
    <property type="gene designation" value="Sin3b"/>
</dbReference>
<dbReference type="VEuPathDB" id="HostDB:ENSMUSG00000031622"/>
<dbReference type="eggNOG" id="KOG4204">
    <property type="taxonomic scope" value="Eukaryota"/>
</dbReference>
<dbReference type="GeneTree" id="ENSGT00940000159560"/>
<dbReference type="HOGENOM" id="CLU_001360_0_1_1"/>
<dbReference type="InParanoid" id="Q62141"/>
<dbReference type="OMA" id="KEIWPFI"/>
<dbReference type="OrthoDB" id="10265969at2759"/>
<dbReference type="PhylomeDB" id="Q62141"/>
<dbReference type="TreeFam" id="TF106187"/>
<dbReference type="Reactome" id="R-MMU-400206">
    <property type="pathway name" value="Regulation of lipid metabolism by PPARalpha"/>
</dbReference>
<dbReference type="Reactome" id="R-MMU-8936459">
    <property type="pathway name" value="RUNX1 regulates genes involved in megakaryocyte differentiation and platelet function"/>
</dbReference>
<dbReference type="Reactome" id="R-MMU-9707564">
    <property type="pathway name" value="Cytoprotection by HMOX1"/>
</dbReference>
<dbReference type="BioGRID-ORCS" id="20467">
    <property type="hits" value="13 hits in 85 CRISPR screens"/>
</dbReference>
<dbReference type="ChiTaRS" id="Sin3b">
    <property type="organism name" value="mouse"/>
</dbReference>
<dbReference type="EvolutionaryTrace" id="Q62141"/>
<dbReference type="PRO" id="PR:Q62141"/>
<dbReference type="Proteomes" id="UP000000589">
    <property type="component" value="Chromosome 8"/>
</dbReference>
<dbReference type="RNAct" id="Q62141">
    <property type="molecule type" value="protein"/>
</dbReference>
<dbReference type="Bgee" id="ENSMUSG00000031622">
    <property type="expression patterns" value="Expressed in placenta labyrinth and 270 other cell types or tissues"/>
</dbReference>
<dbReference type="ExpressionAtlas" id="Q62141">
    <property type="expression patterns" value="baseline and differential"/>
</dbReference>
<dbReference type="GO" id="GO:0030849">
    <property type="term" value="C:autosome"/>
    <property type="evidence" value="ECO:0000314"/>
    <property type="project" value="MGI"/>
</dbReference>
<dbReference type="GO" id="GO:0005737">
    <property type="term" value="C:cytoplasm"/>
    <property type="evidence" value="ECO:0000314"/>
    <property type="project" value="UniProtKB"/>
</dbReference>
<dbReference type="GO" id="GO:0005634">
    <property type="term" value="C:nucleus"/>
    <property type="evidence" value="ECO:0000314"/>
    <property type="project" value="UniProtKB"/>
</dbReference>
<dbReference type="GO" id="GO:0070822">
    <property type="term" value="C:Sin3-type complex"/>
    <property type="evidence" value="ECO:0000303"/>
    <property type="project" value="ComplexPortal"/>
</dbReference>
<dbReference type="GO" id="GO:0000805">
    <property type="term" value="C:X chromosome"/>
    <property type="evidence" value="ECO:0000314"/>
    <property type="project" value="MGI"/>
</dbReference>
<dbReference type="GO" id="GO:0001741">
    <property type="term" value="C:XY body"/>
    <property type="evidence" value="ECO:0000314"/>
    <property type="project" value="UniProtKB"/>
</dbReference>
<dbReference type="GO" id="GO:0000806">
    <property type="term" value="C:Y chromosome"/>
    <property type="evidence" value="ECO:0000314"/>
    <property type="project" value="MGI"/>
</dbReference>
<dbReference type="GO" id="GO:0003682">
    <property type="term" value="F:chromatin binding"/>
    <property type="evidence" value="ECO:0000314"/>
    <property type="project" value="MGI"/>
</dbReference>
<dbReference type="GO" id="GO:0003714">
    <property type="term" value="F:transcription corepressor activity"/>
    <property type="evidence" value="ECO:0000314"/>
    <property type="project" value="UniProtKB"/>
</dbReference>
<dbReference type="GO" id="GO:0048738">
    <property type="term" value="P:cardiac muscle tissue development"/>
    <property type="evidence" value="ECO:0000314"/>
    <property type="project" value="UniProtKB"/>
</dbReference>
<dbReference type="GO" id="GO:0045786">
    <property type="term" value="P:negative regulation of cell cycle"/>
    <property type="evidence" value="ECO:0000304"/>
    <property type="project" value="UniProtKB"/>
</dbReference>
<dbReference type="GO" id="GO:0030336">
    <property type="term" value="P:negative regulation of cell migration"/>
    <property type="evidence" value="ECO:0000303"/>
    <property type="project" value="ComplexPortal"/>
</dbReference>
<dbReference type="GO" id="GO:0045892">
    <property type="term" value="P:negative regulation of DNA-templated transcription"/>
    <property type="evidence" value="ECO:0000314"/>
    <property type="project" value="UniProtKB"/>
</dbReference>
<dbReference type="GO" id="GO:0000122">
    <property type="term" value="P:negative regulation of transcription by RNA polymerase II"/>
    <property type="evidence" value="ECO:0000303"/>
    <property type="project" value="ComplexPortal"/>
</dbReference>
<dbReference type="GO" id="GO:0007519">
    <property type="term" value="P:skeletal muscle tissue development"/>
    <property type="evidence" value="ECO:0000314"/>
    <property type="project" value="UniProtKB"/>
</dbReference>
<dbReference type="FunFam" id="1.20.1160.11:FF:000002">
    <property type="entry name" value="Paired amphipathic helix protein SIN3"/>
    <property type="match status" value="1"/>
</dbReference>
<dbReference type="FunFam" id="1.20.1160.11:FF:000001">
    <property type="entry name" value="Paired amphipathic helix protein Sin3"/>
    <property type="match status" value="1"/>
</dbReference>
<dbReference type="FunFam" id="1.20.1160.11:FF:000005">
    <property type="entry name" value="SIN3 transcription regulator family member B"/>
    <property type="match status" value="1"/>
</dbReference>
<dbReference type="Gene3D" id="1.20.1160.11">
    <property type="entry name" value="Paired amphipathic helix"/>
    <property type="match status" value="3"/>
</dbReference>
<dbReference type="IDEAL" id="IID50092"/>
<dbReference type="InterPro" id="IPR013194">
    <property type="entry name" value="HDAC_interact_dom"/>
</dbReference>
<dbReference type="InterPro" id="IPR003822">
    <property type="entry name" value="PAH"/>
</dbReference>
<dbReference type="InterPro" id="IPR036600">
    <property type="entry name" value="PAH_sf"/>
</dbReference>
<dbReference type="InterPro" id="IPR039774">
    <property type="entry name" value="Sin3-like"/>
</dbReference>
<dbReference type="InterPro" id="IPR031693">
    <property type="entry name" value="Sin3_C"/>
</dbReference>
<dbReference type="PANTHER" id="PTHR12346:SF1">
    <property type="entry name" value="PAIRED AMPHIPATHIC HELIX PROTEIN SIN3B"/>
    <property type="match status" value="1"/>
</dbReference>
<dbReference type="PANTHER" id="PTHR12346">
    <property type="entry name" value="SIN3B-RELATED"/>
    <property type="match status" value="1"/>
</dbReference>
<dbReference type="Pfam" id="PF02671">
    <property type="entry name" value="PAH"/>
    <property type="match status" value="3"/>
</dbReference>
<dbReference type="Pfam" id="PF08295">
    <property type="entry name" value="Sin3_corepress"/>
    <property type="match status" value="1"/>
</dbReference>
<dbReference type="Pfam" id="PF16879">
    <property type="entry name" value="Sin3a_C"/>
    <property type="match status" value="1"/>
</dbReference>
<dbReference type="SMART" id="SM00761">
    <property type="entry name" value="HDAC_interact"/>
    <property type="match status" value="1"/>
</dbReference>
<dbReference type="SUPFAM" id="SSF47762">
    <property type="entry name" value="PAH2 domain"/>
    <property type="match status" value="3"/>
</dbReference>
<dbReference type="PROSITE" id="PS51477">
    <property type="entry name" value="PAH"/>
    <property type="match status" value="3"/>
</dbReference>
<gene>
    <name type="primary">Sin3b</name>
    <name type="synonym">Kiaa0700</name>
</gene>